<dbReference type="EC" id="6.1.1.9" evidence="1"/>
<dbReference type="EMBL" id="AE017283">
    <property type="protein sequence ID" value="AAT83311.1"/>
    <property type="molecule type" value="Genomic_DNA"/>
</dbReference>
<dbReference type="RefSeq" id="WP_002531079.1">
    <property type="nucleotide sequence ID" value="NZ_CP025935.1"/>
</dbReference>
<dbReference type="SMR" id="Q6A7F4"/>
<dbReference type="EnsemblBacteria" id="AAT83311">
    <property type="protein sequence ID" value="AAT83311"/>
    <property type="gene ID" value="PPA1568"/>
</dbReference>
<dbReference type="KEGG" id="pac:PPA1568"/>
<dbReference type="PATRIC" id="fig|267747.3.peg.1613"/>
<dbReference type="eggNOG" id="COG0525">
    <property type="taxonomic scope" value="Bacteria"/>
</dbReference>
<dbReference type="HOGENOM" id="CLU_001493_0_2_11"/>
<dbReference type="Proteomes" id="UP000000603">
    <property type="component" value="Chromosome"/>
</dbReference>
<dbReference type="GO" id="GO:0005829">
    <property type="term" value="C:cytosol"/>
    <property type="evidence" value="ECO:0007669"/>
    <property type="project" value="TreeGrafter"/>
</dbReference>
<dbReference type="GO" id="GO:0002161">
    <property type="term" value="F:aminoacyl-tRNA deacylase activity"/>
    <property type="evidence" value="ECO:0007669"/>
    <property type="project" value="InterPro"/>
</dbReference>
<dbReference type="GO" id="GO:0005524">
    <property type="term" value="F:ATP binding"/>
    <property type="evidence" value="ECO:0007669"/>
    <property type="project" value="UniProtKB-UniRule"/>
</dbReference>
<dbReference type="GO" id="GO:0004832">
    <property type="term" value="F:valine-tRNA ligase activity"/>
    <property type="evidence" value="ECO:0007669"/>
    <property type="project" value="UniProtKB-UniRule"/>
</dbReference>
<dbReference type="GO" id="GO:0006438">
    <property type="term" value="P:valyl-tRNA aminoacylation"/>
    <property type="evidence" value="ECO:0007669"/>
    <property type="project" value="UniProtKB-UniRule"/>
</dbReference>
<dbReference type="CDD" id="cd07962">
    <property type="entry name" value="Anticodon_Ia_Val"/>
    <property type="match status" value="1"/>
</dbReference>
<dbReference type="Gene3D" id="3.40.50.620">
    <property type="entry name" value="HUPs"/>
    <property type="match status" value="2"/>
</dbReference>
<dbReference type="Gene3D" id="1.10.730.10">
    <property type="entry name" value="Isoleucyl-tRNA Synthetase, Domain 1"/>
    <property type="match status" value="1"/>
</dbReference>
<dbReference type="HAMAP" id="MF_02005">
    <property type="entry name" value="Val_tRNA_synth_type2"/>
    <property type="match status" value="1"/>
</dbReference>
<dbReference type="InterPro" id="IPR002300">
    <property type="entry name" value="aa-tRNA-synth_Ia"/>
</dbReference>
<dbReference type="InterPro" id="IPR033705">
    <property type="entry name" value="Anticodon_Ia_Val"/>
</dbReference>
<dbReference type="InterPro" id="IPR013155">
    <property type="entry name" value="M/V/L/I-tRNA-synth_anticd-bd"/>
</dbReference>
<dbReference type="InterPro" id="IPR014729">
    <property type="entry name" value="Rossmann-like_a/b/a_fold"/>
</dbReference>
<dbReference type="InterPro" id="IPR009080">
    <property type="entry name" value="tRNAsynth_Ia_anticodon-bd"/>
</dbReference>
<dbReference type="InterPro" id="IPR009008">
    <property type="entry name" value="Val/Leu/Ile-tRNA-synth_edit"/>
</dbReference>
<dbReference type="InterPro" id="IPR022874">
    <property type="entry name" value="Valine-tRNA_ligase_type_2"/>
</dbReference>
<dbReference type="InterPro" id="IPR002303">
    <property type="entry name" value="Valyl-tRNA_ligase"/>
</dbReference>
<dbReference type="InterPro" id="IPR048044">
    <property type="entry name" value="Valyl-tRNA_ligase_actino"/>
</dbReference>
<dbReference type="NCBIfam" id="NF000540">
    <property type="entry name" value="alt_ValS"/>
    <property type="match status" value="1"/>
</dbReference>
<dbReference type="NCBIfam" id="NF009687">
    <property type="entry name" value="PRK13208.1"/>
    <property type="match status" value="1"/>
</dbReference>
<dbReference type="PANTHER" id="PTHR11946:SF93">
    <property type="entry name" value="VALINE--TRNA LIGASE, CHLOROPLASTIC_MITOCHONDRIAL 2"/>
    <property type="match status" value="1"/>
</dbReference>
<dbReference type="PANTHER" id="PTHR11946">
    <property type="entry name" value="VALYL-TRNA SYNTHETASES"/>
    <property type="match status" value="1"/>
</dbReference>
<dbReference type="Pfam" id="PF08264">
    <property type="entry name" value="Anticodon_1"/>
    <property type="match status" value="1"/>
</dbReference>
<dbReference type="Pfam" id="PF00133">
    <property type="entry name" value="tRNA-synt_1"/>
    <property type="match status" value="1"/>
</dbReference>
<dbReference type="PRINTS" id="PR00986">
    <property type="entry name" value="TRNASYNTHVAL"/>
</dbReference>
<dbReference type="SUPFAM" id="SSF47323">
    <property type="entry name" value="Anticodon-binding domain of a subclass of class I aminoacyl-tRNA synthetases"/>
    <property type="match status" value="1"/>
</dbReference>
<dbReference type="SUPFAM" id="SSF52374">
    <property type="entry name" value="Nucleotidylyl transferase"/>
    <property type="match status" value="1"/>
</dbReference>
<dbReference type="SUPFAM" id="SSF50677">
    <property type="entry name" value="ValRS/IleRS/LeuRS editing domain"/>
    <property type="match status" value="1"/>
</dbReference>
<keyword id="KW-0030">Aminoacyl-tRNA synthetase</keyword>
<keyword id="KW-0067">ATP-binding</keyword>
<keyword id="KW-0963">Cytoplasm</keyword>
<keyword id="KW-0436">Ligase</keyword>
<keyword id="KW-0547">Nucleotide-binding</keyword>
<keyword id="KW-0648">Protein biosynthesis</keyword>
<gene>
    <name evidence="1" type="primary">valS</name>
    <name type="ordered locus">PPA1568</name>
</gene>
<organism>
    <name type="scientific">Cutibacterium acnes (strain DSM 16379 / KPA171202)</name>
    <name type="common">Propionibacterium acnes</name>
    <dbReference type="NCBI Taxonomy" id="267747"/>
    <lineage>
        <taxon>Bacteria</taxon>
        <taxon>Bacillati</taxon>
        <taxon>Actinomycetota</taxon>
        <taxon>Actinomycetes</taxon>
        <taxon>Propionibacteriales</taxon>
        <taxon>Propionibacteriaceae</taxon>
        <taxon>Cutibacterium</taxon>
    </lineage>
</organism>
<protein>
    <recommendedName>
        <fullName evidence="1">Valine--tRNA ligase</fullName>
        <ecNumber evidence="1">6.1.1.9</ecNumber>
    </recommendedName>
    <alternativeName>
        <fullName evidence="1">Valyl-tRNA synthetase</fullName>
        <shortName evidence="1">ValRS</shortName>
    </alternativeName>
</protein>
<name>SYV_CUTAK</name>
<comment type="function">
    <text evidence="1">Catalyzes the attachment of valine to tRNA(Val). As ValRS can inadvertently accommodate and process structurally similar amino acids such as threonine, to avoid such errors, it has a 'posttransfer' editing activity that hydrolyzes mischarged Thr-tRNA(Val) in a tRNA-dependent manner.</text>
</comment>
<comment type="catalytic activity">
    <reaction evidence="1">
        <text>tRNA(Val) + L-valine + ATP = L-valyl-tRNA(Val) + AMP + diphosphate</text>
        <dbReference type="Rhea" id="RHEA:10704"/>
        <dbReference type="Rhea" id="RHEA-COMP:9672"/>
        <dbReference type="Rhea" id="RHEA-COMP:9708"/>
        <dbReference type="ChEBI" id="CHEBI:30616"/>
        <dbReference type="ChEBI" id="CHEBI:33019"/>
        <dbReference type="ChEBI" id="CHEBI:57762"/>
        <dbReference type="ChEBI" id="CHEBI:78442"/>
        <dbReference type="ChEBI" id="CHEBI:78537"/>
        <dbReference type="ChEBI" id="CHEBI:456215"/>
        <dbReference type="EC" id="6.1.1.9"/>
    </reaction>
</comment>
<comment type="subunit">
    <text evidence="1">Monomer.</text>
</comment>
<comment type="subcellular location">
    <subcellularLocation>
        <location evidence="1">Cytoplasm</location>
    </subcellularLocation>
</comment>
<comment type="domain">
    <text evidence="1">ValRS has two distinct active sites: one for aminoacylation and one for editing. The misactivated threonine is translocated from the active site to the editing site.</text>
</comment>
<comment type="similarity">
    <text evidence="1">Belongs to the class-I aminoacyl-tRNA synthetase family. ValS type 2 subfamily.</text>
</comment>
<sequence>MTSQTFTTSSATPPTRGVVPDKPALEGLEVKWGKIWEDEQLYAFDATTVDSREQVFAIDTPPPTVSGHLHPGHVFSYTHTDTVARYQRMRGKKVFYPMGWDDNGLPTERRVQNYYGVRCDPSLPYDPDFTPPSKPNPKRQVPISRRNFVELCVELTAVDEKTFQDLWRAVGLSVDWNQLYTTISPESQRIAQLAFLRNYARGEAYLSDAPTLWDVTFSTAVAQAELEARDYPGAYHRLGFHRPNGEDVFIETTRPELLAACCALIAHPDDERYQHLFGTTVTTPLYGVEVPVLAHSAAEMDKGAGIAMCCTFGDLTDVAWWRELQLPTRTIIGRDGRILSETPQWIIDAGSAERYEAIAGKTTFTARKLVVEALVESGEMDGEPKPTQRKANFYEKGDKPLEIIGTRQWYIRNGGRDDDLRNALLERGRELEWVPEHMRHRYENWVEGLNGDWLISRQRFFGVPFPVWYPLGTDGEPDYDHPLLPDESALPVDPASQPPSGYQESQRGVAGGFIGDPDVMDTWATSSLTPQIVTGWERDADLFAKTFPMDFAPEAHDIIRTWVFSRVVRAHLENGMLPWKRAAISGFVTDPDRKKMSKSKGNTVVPTEIIDQFGADAVRWRAAMARPGMDSPFDKAQMKVGRRLAMKILNASKFVLGFGEGGQVCDITNPADLSMLAGLRELIAEATEAFDKFNYTAALEVCEQFFWTFCDDYLELIKERAYDSEGADNAGALSARTALRLALDVMLRLFAPFLPFVTEEVWSWWKDGSVHTSSWPTADEVPATGDVDLMSDVSAALVELRGVKSTHKVPMRTPILSARISAPASVIANLKAVESDLTKVSKTESLTFLTGGDKLVLEAELGEPPAKRKK</sequence>
<proteinExistence type="inferred from homology"/>
<evidence type="ECO:0000255" key="1">
    <source>
        <dbReference type="HAMAP-Rule" id="MF_02005"/>
    </source>
</evidence>
<evidence type="ECO:0000256" key="2">
    <source>
        <dbReference type="SAM" id="MobiDB-lite"/>
    </source>
</evidence>
<accession>Q6A7F4</accession>
<reference key="1">
    <citation type="journal article" date="2004" name="Science">
        <title>The complete genome sequence of Propionibacterium acnes, a commensal of human skin.</title>
        <authorList>
            <person name="Brueggemann H."/>
            <person name="Henne A."/>
            <person name="Hoster F."/>
            <person name="Liesegang H."/>
            <person name="Wiezer A."/>
            <person name="Strittmatter A."/>
            <person name="Hujer S."/>
            <person name="Duerre P."/>
            <person name="Gottschalk G."/>
        </authorList>
    </citation>
    <scope>NUCLEOTIDE SEQUENCE [LARGE SCALE GENOMIC DNA]</scope>
    <source>
        <strain>DSM 16379 / KPA171202</strain>
    </source>
</reference>
<feature type="chain" id="PRO_0000224612" description="Valine--tRNA ligase">
    <location>
        <begin position="1"/>
        <end position="870"/>
    </location>
</feature>
<feature type="region of interest" description="Disordered" evidence="2">
    <location>
        <begin position="1"/>
        <end position="21"/>
    </location>
</feature>
<feature type="region of interest" description="Disordered" evidence="2">
    <location>
        <begin position="479"/>
        <end position="505"/>
    </location>
</feature>
<feature type="short sequence motif" description="'HIGH' region">
    <location>
        <begin position="63"/>
        <end position="73"/>
    </location>
</feature>
<feature type="short sequence motif" description="'KMSKS' region">
    <location>
        <begin position="595"/>
        <end position="599"/>
    </location>
</feature>
<feature type="compositionally biased region" description="Polar residues" evidence="2">
    <location>
        <begin position="1"/>
        <end position="13"/>
    </location>
</feature>
<feature type="binding site" evidence="1">
    <location>
        <position position="598"/>
    </location>
    <ligand>
        <name>ATP</name>
        <dbReference type="ChEBI" id="CHEBI:30616"/>
    </ligand>
</feature>